<accession>Q9PH32</accession>
<organism>
    <name type="scientific">Xylella fastidiosa (strain 9a5c)</name>
    <dbReference type="NCBI Taxonomy" id="160492"/>
    <lineage>
        <taxon>Bacteria</taxon>
        <taxon>Pseudomonadati</taxon>
        <taxon>Pseudomonadota</taxon>
        <taxon>Gammaproteobacteria</taxon>
        <taxon>Lysobacterales</taxon>
        <taxon>Lysobacteraceae</taxon>
        <taxon>Xylella</taxon>
    </lineage>
</organism>
<sequence>MDKALVSPIEDAFARYSTLTVEEIEDSIRPTVNRVIDGLETGAFRVAEPDNHGGWKVNEWLKKAVLLYFRVHDTMIVDAQPAPFWDKIESRFSGYDAAKFRAAGVRVVPGAIARRGSYFGKDVVLMPSFTNIGAYVGEGTMIDTWATVGSCAQLGAHCHLSGGAAIGGVLEPLQASPAIIEDHCFIGARSEIVEGVIVGHHSVISMGVFISQSTRIYNRATGEISYGYVPPYSVVVSGQLPAKDGTHSLYCAVIVKQVDEKTRAKTSINELLRGFAD</sequence>
<comment type="catalytic activity">
    <reaction evidence="1">
        <text>(S)-2,3,4,5-tetrahydrodipicolinate + succinyl-CoA + H2O = (S)-2-succinylamino-6-oxoheptanedioate + CoA</text>
        <dbReference type="Rhea" id="RHEA:17325"/>
        <dbReference type="ChEBI" id="CHEBI:15377"/>
        <dbReference type="ChEBI" id="CHEBI:15685"/>
        <dbReference type="ChEBI" id="CHEBI:16845"/>
        <dbReference type="ChEBI" id="CHEBI:57287"/>
        <dbReference type="ChEBI" id="CHEBI:57292"/>
        <dbReference type="EC" id="2.3.1.117"/>
    </reaction>
</comment>
<comment type="pathway">
    <text evidence="1">Amino-acid biosynthesis; L-lysine biosynthesis via DAP pathway; LL-2,6-diaminopimelate from (S)-tetrahydrodipicolinate (succinylase route): step 1/3.</text>
</comment>
<comment type="subunit">
    <text evidence="1">Homotrimer.</text>
</comment>
<comment type="subcellular location">
    <subcellularLocation>
        <location evidence="1">Cytoplasm</location>
    </subcellularLocation>
</comment>
<comment type="similarity">
    <text evidence="1">Belongs to the transferase hexapeptide repeat family.</text>
</comment>
<comment type="sequence caution" evidence="2">
    <conflict type="erroneous initiation">
        <sequence resource="EMBL-CDS" id="AAF82927"/>
    </conflict>
</comment>
<dbReference type="EC" id="2.3.1.117" evidence="1"/>
<dbReference type="EMBL" id="AE003849">
    <property type="protein sequence ID" value="AAF82927.1"/>
    <property type="status" value="ALT_INIT"/>
    <property type="molecule type" value="Genomic_DNA"/>
</dbReference>
<dbReference type="PIR" id="H82845">
    <property type="entry name" value="H82845"/>
</dbReference>
<dbReference type="SMR" id="Q9PH32"/>
<dbReference type="STRING" id="160492.XF_0114"/>
<dbReference type="KEGG" id="xfa:XF_0114"/>
<dbReference type="eggNOG" id="COG2171">
    <property type="taxonomic scope" value="Bacteria"/>
</dbReference>
<dbReference type="HOGENOM" id="CLU_050859_0_1_6"/>
<dbReference type="UniPathway" id="UPA00034">
    <property type="reaction ID" value="UER00019"/>
</dbReference>
<dbReference type="Proteomes" id="UP000000812">
    <property type="component" value="Chromosome"/>
</dbReference>
<dbReference type="GO" id="GO:0005737">
    <property type="term" value="C:cytoplasm"/>
    <property type="evidence" value="ECO:0007669"/>
    <property type="project" value="UniProtKB-SubCell"/>
</dbReference>
<dbReference type="GO" id="GO:0008666">
    <property type="term" value="F:2,3,4,5-tetrahydropyridine-2,6-dicarboxylate N-succinyltransferase activity"/>
    <property type="evidence" value="ECO:0007669"/>
    <property type="project" value="UniProtKB-UniRule"/>
</dbReference>
<dbReference type="GO" id="GO:0016779">
    <property type="term" value="F:nucleotidyltransferase activity"/>
    <property type="evidence" value="ECO:0007669"/>
    <property type="project" value="TreeGrafter"/>
</dbReference>
<dbReference type="GO" id="GO:0019877">
    <property type="term" value="P:diaminopimelate biosynthetic process"/>
    <property type="evidence" value="ECO:0007669"/>
    <property type="project" value="UniProtKB-UniRule"/>
</dbReference>
<dbReference type="GO" id="GO:0009089">
    <property type="term" value="P:lysine biosynthetic process via diaminopimelate"/>
    <property type="evidence" value="ECO:0007669"/>
    <property type="project" value="UniProtKB-UniRule"/>
</dbReference>
<dbReference type="CDD" id="cd03350">
    <property type="entry name" value="LbH_THP_succinylT"/>
    <property type="match status" value="1"/>
</dbReference>
<dbReference type="Gene3D" id="2.160.10.10">
    <property type="entry name" value="Hexapeptide repeat proteins"/>
    <property type="match status" value="1"/>
</dbReference>
<dbReference type="Gene3D" id="1.10.166.10">
    <property type="entry name" value="Tetrahydrodipicolinate-N-succinyltransferase, N-terminal domain"/>
    <property type="match status" value="1"/>
</dbReference>
<dbReference type="HAMAP" id="MF_00811">
    <property type="entry name" value="DapD"/>
    <property type="match status" value="1"/>
</dbReference>
<dbReference type="InterPro" id="IPR005664">
    <property type="entry name" value="DapD_Trfase_Hexpep_rpt_fam"/>
</dbReference>
<dbReference type="InterPro" id="IPR001451">
    <property type="entry name" value="Hexapep"/>
</dbReference>
<dbReference type="InterPro" id="IPR023180">
    <property type="entry name" value="THP_succinylTrfase_dom1"/>
</dbReference>
<dbReference type="InterPro" id="IPR037133">
    <property type="entry name" value="THP_succinylTrfase_N_sf"/>
</dbReference>
<dbReference type="InterPro" id="IPR011004">
    <property type="entry name" value="Trimer_LpxA-like_sf"/>
</dbReference>
<dbReference type="NCBIfam" id="TIGR00965">
    <property type="entry name" value="dapD"/>
    <property type="match status" value="1"/>
</dbReference>
<dbReference type="NCBIfam" id="NF008808">
    <property type="entry name" value="PRK11830.1"/>
    <property type="match status" value="1"/>
</dbReference>
<dbReference type="PANTHER" id="PTHR19136:SF52">
    <property type="entry name" value="2,3,4,5-TETRAHYDROPYRIDINE-2,6-DICARBOXYLATE N-SUCCINYLTRANSFERASE"/>
    <property type="match status" value="1"/>
</dbReference>
<dbReference type="PANTHER" id="PTHR19136">
    <property type="entry name" value="MOLYBDENUM COFACTOR GUANYLYLTRANSFERASE"/>
    <property type="match status" value="1"/>
</dbReference>
<dbReference type="Pfam" id="PF14602">
    <property type="entry name" value="Hexapep_2"/>
    <property type="match status" value="1"/>
</dbReference>
<dbReference type="Pfam" id="PF14805">
    <property type="entry name" value="THDPS_N_2"/>
    <property type="match status" value="1"/>
</dbReference>
<dbReference type="SUPFAM" id="SSF51161">
    <property type="entry name" value="Trimeric LpxA-like enzymes"/>
    <property type="match status" value="1"/>
</dbReference>
<name>DAPD_XYLFA</name>
<evidence type="ECO:0000255" key="1">
    <source>
        <dbReference type="HAMAP-Rule" id="MF_00811"/>
    </source>
</evidence>
<evidence type="ECO:0000305" key="2"/>
<keyword id="KW-0012">Acyltransferase</keyword>
<keyword id="KW-0028">Amino-acid biosynthesis</keyword>
<keyword id="KW-0963">Cytoplasm</keyword>
<keyword id="KW-0220">Diaminopimelate biosynthesis</keyword>
<keyword id="KW-0457">Lysine biosynthesis</keyword>
<keyword id="KW-0677">Repeat</keyword>
<keyword id="KW-0808">Transferase</keyword>
<proteinExistence type="inferred from homology"/>
<reference key="1">
    <citation type="journal article" date="2000" name="Nature">
        <title>The genome sequence of the plant pathogen Xylella fastidiosa.</title>
        <authorList>
            <person name="Simpson A.J.G."/>
            <person name="Reinach F.C."/>
            <person name="Arruda P."/>
            <person name="Abreu F.A."/>
            <person name="Acencio M."/>
            <person name="Alvarenga R."/>
            <person name="Alves L.M.C."/>
            <person name="Araya J.E."/>
            <person name="Baia G.S."/>
            <person name="Baptista C.S."/>
            <person name="Barros M.H."/>
            <person name="Bonaccorsi E.D."/>
            <person name="Bordin S."/>
            <person name="Bove J.M."/>
            <person name="Briones M.R.S."/>
            <person name="Bueno M.R.P."/>
            <person name="Camargo A.A."/>
            <person name="Camargo L.E.A."/>
            <person name="Carraro D.M."/>
            <person name="Carrer H."/>
            <person name="Colauto N.B."/>
            <person name="Colombo C."/>
            <person name="Costa F.F."/>
            <person name="Costa M.C.R."/>
            <person name="Costa-Neto C.M."/>
            <person name="Coutinho L.L."/>
            <person name="Cristofani M."/>
            <person name="Dias-Neto E."/>
            <person name="Docena C."/>
            <person name="El-Dorry H."/>
            <person name="Facincani A.P."/>
            <person name="Ferreira A.J.S."/>
            <person name="Ferreira V.C.A."/>
            <person name="Ferro J.A."/>
            <person name="Fraga J.S."/>
            <person name="Franca S.C."/>
            <person name="Franco M.C."/>
            <person name="Frohme M."/>
            <person name="Furlan L.R."/>
            <person name="Garnier M."/>
            <person name="Goldman G.H."/>
            <person name="Goldman M.H.S."/>
            <person name="Gomes S.L."/>
            <person name="Gruber A."/>
            <person name="Ho P.L."/>
            <person name="Hoheisel J.D."/>
            <person name="Junqueira M.L."/>
            <person name="Kemper E.L."/>
            <person name="Kitajima J.P."/>
            <person name="Krieger J.E."/>
            <person name="Kuramae E.E."/>
            <person name="Laigret F."/>
            <person name="Lambais M.R."/>
            <person name="Leite L.C.C."/>
            <person name="Lemos E.G.M."/>
            <person name="Lemos M.V.F."/>
            <person name="Lopes S.A."/>
            <person name="Lopes C.R."/>
            <person name="Machado J.A."/>
            <person name="Machado M.A."/>
            <person name="Madeira A.M.B.N."/>
            <person name="Madeira H.M.F."/>
            <person name="Marino C.L."/>
            <person name="Marques M.V."/>
            <person name="Martins E.A.L."/>
            <person name="Martins E.M.F."/>
            <person name="Matsukuma A.Y."/>
            <person name="Menck C.F.M."/>
            <person name="Miracca E.C."/>
            <person name="Miyaki C.Y."/>
            <person name="Monteiro-Vitorello C.B."/>
            <person name="Moon D.H."/>
            <person name="Nagai M.A."/>
            <person name="Nascimento A.L.T.O."/>
            <person name="Netto L.E.S."/>
            <person name="Nhani A. Jr."/>
            <person name="Nobrega F.G."/>
            <person name="Nunes L.R."/>
            <person name="Oliveira M.A."/>
            <person name="de Oliveira M.C."/>
            <person name="de Oliveira R.C."/>
            <person name="Palmieri D.A."/>
            <person name="Paris A."/>
            <person name="Peixoto B.R."/>
            <person name="Pereira G.A.G."/>
            <person name="Pereira H.A. Jr."/>
            <person name="Pesquero J.B."/>
            <person name="Quaggio R.B."/>
            <person name="Roberto P.G."/>
            <person name="Rodrigues V."/>
            <person name="de Rosa A.J.M."/>
            <person name="de Rosa V.E. Jr."/>
            <person name="de Sa R.G."/>
            <person name="Santelli R.V."/>
            <person name="Sawasaki H.E."/>
            <person name="da Silva A.C.R."/>
            <person name="da Silva A.M."/>
            <person name="da Silva F.R."/>
            <person name="Silva W.A. Jr."/>
            <person name="da Silveira J.F."/>
            <person name="Silvestri M.L.Z."/>
            <person name="Siqueira W.J."/>
            <person name="de Souza A.A."/>
            <person name="de Souza A.P."/>
            <person name="Terenzi M.F."/>
            <person name="Truffi D."/>
            <person name="Tsai S.M."/>
            <person name="Tsuhako M.H."/>
            <person name="Vallada H."/>
            <person name="Van Sluys M.A."/>
            <person name="Verjovski-Almeida S."/>
            <person name="Vettore A.L."/>
            <person name="Zago M.A."/>
            <person name="Zatz M."/>
            <person name="Meidanis J."/>
            <person name="Setubal J.C."/>
        </authorList>
    </citation>
    <scope>NUCLEOTIDE SEQUENCE [LARGE SCALE GENOMIC DNA]</scope>
    <source>
        <strain>9a5c</strain>
    </source>
</reference>
<gene>
    <name evidence="1" type="primary">dapD</name>
    <name type="ordered locus">XF_0114</name>
</gene>
<feature type="chain" id="PRO_0000196976" description="2,3,4,5-tetrahydropyridine-2,6-dicarboxylate N-succinyltransferase">
    <location>
        <begin position="1"/>
        <end position="277"/>
    </location>
</feature>
<feature type="binding site" evidence="1">
    <location>
        <position position="106"/>
    </location>
    <ligand>
        <name>substrate</name>
    </ligand>
</feature>
<feature type="binding site" evidence="1">
    <location>
        <position position="143"/>
    </location>
    <ligand>
        <name>substrate</name>
    </ligand>
</feature>
<protein>
    <recommendedName>
        <fullName evidence="1">2,3,4,5-tetrahydropyridine-2,6-dicarboxylate N-succinyltransferase</fullName>
        <ecNumber evidence="1">2.3.1.117</ecNumber>
    </recommendedName>
    <alternativeName>
        <fullName evidence="1">Tetrahydrodipicolinate N-succinyltransferase</fullName>
        <shortName evidence="1">THDP succinyltransferase</shortName>
        <shortName evidence="1">THP succinyltransferase</shortName>
        <shortName evidence="1">Tetrahydropicolinate succinylase</shortName>
    </alternativeName>
</protein>